<name>DBP3_EREGS</name>
<gene>
    <name type="primary">DBP3</name>
    <name type="ordered locus">AFL080W</name>
</gene>
<comment type="function">
    <text evidence="1">ATP-dependent RNA helicase required for 60S ribosomal subunit synthesis. Involved in efficient pre-rRNA processing, predominantly at site A3, which is necessary for the normal formation of 25S and 5.8S rRNAs (By similarity).</text>
</comment>
<comment type="catalytic activity">
    <reaction>
        <text>ATP + H2O = ADP + phosphate + H(+)</text>
        <dbReference type="Rhea" id="RHEA:13065"/>
        <dbReference type="ChEBI" id="CHEBI:15377"/>
        <dbReference type="ChEBI" id="CHEBI:15378"/>
        <dbReference type="ChEBI" id="CHEBI:30616"/>
        <dbReference type="ChEBI" id="CHEBI:43474"/>
        <dbReference type="ChEBI" id="CHEBI:456216"/>
        <dbReference type="EC" id="3.6.4.13"/>
    </reaction>
</comment>
<comment type="subcellular location">
    <subcellularLocation>
        <location evidence="1">Nucleus</location>
        <location evidence="1">Nucleolus</location>
    </subcellularLocation>
</comment>
<comment type="domain">
    <text>The Q motif is unique to and characteristic of the DEAD box family of RNA helicases and controls ATP binding and hydrolysis.</text>
</comment>
<comment type="similarity">
    <text evidence="5">Belongs to the DEAD box helicase family. DDX5/DBP2 subfamily.</text>
</comment>
<protein>
    <recommendedName>
        <fullName>ATP-dependent RNA helicase DBP3</fullName>
        <ecNumber>3.6.4.13</ecNumber>
    </recommendedName>
</protein>
<evidence type="ECO:0000250" key="1"/>
<evidence type="ECO:0000255" key="2">
    <source>
        <dbReference type="PROSITE-ProRule" id="PRU00541"/>
    </source>
</evidence>
<evidence type="ECO:0000255" key="3">
    <source>
        <dbReference type="PROSITE-ProRule" id="PRU00542"/>
    </source>
</evidence>
<evidence type="ECO:0000256" key="4">
    <source>
        <dbReference type="SAM" id="MobiDB-lite"/>
    </source>
</evidence>
<evidence type="ECO:0000305" key="5"/>
<reference key="1">
    <citation type="journal article" date="2004" name="Science">
        <title>The Ashbya gossypii genome as a tool for mapping the ancient Saccharomyces cerevisiae genome.</title>
        <authorList>
            <person name="Dietrich F.S."/>
            <person name="Voegeli S."/>
            <person name="Brachat S."/>
            <person name="Lerch A."/>
            <person name="Gates K."/>
            <person name="Steiner S."/>
            <person name="Mohr C."/>
            <person name="Poehlmann R."/>
            <person name="Luedi P."/>
            <person name="Choi S."/>
            <person name="Wing R.A."/>
            <person name="Flavier A."/>
            <person name="Gaffney T.D."/>
            <person name="Philippsen P."/>
        </authorList>
    </citation>
    <scope>NUCLEOTIDE SEQUENCE [LARGE SCALE GENOMIC DNA]</scope>
    <source>
        <strain>ATCC 10895 / CBS 109.51 / FGSC 9923 / NRRL Y-1056</strain>
    </source>
</reference>
<reference key="2">
    <citation type="journal article" date="2013" name="G3 (Bethesda)">
        <title>Genomes of Ashbya fungi isolated from insects reveal four mating-type loci, numerous translocations, lack of transposons, and distinct gene duplications.</title>
        <authorList>
            <person name="Dietrich F.S."/>
            <person name="Voegeli S."/>
            <person name="Kuo S."/>
            <person name="Philippsen P."/>
        </authorList>
    </citation>
    <scope>GENOME REANNOTATION</scope>
    <source>
        <strain>ATCC 10895 / CBS 109.51 / FGSC 9923 / NRRL Y-1056</strain>
    </source>
</reference>
<feature type="chain" id="PRO_0000227945" description="ATP-dependent RNA helicase DBP3">
    <location>
        <begin position="1"/>
        <end position="535"/>
    </location>
</feature>
<feature type="domain" description="Helicase ATP-binding" evidence="2">
    <location>
        <begin position="154"/>
        <end position="327"/>
    </location>
</feature>
<feature type="domain" description="Helicase C-terminal" evidence="3">
    <location>
        <begin position="352"/>
        <end position="505"/>
    </location>
</feature>
<feature type="region of interest" description="Disordered" evidence="4">
    <location>
        <begin position="1"/>
        <end position="82"/>
    </location>
</feature>
<feature type="short sequence motif" description="Q motif">
    <location>
        <begin position="125"/>
        <end position="151"/>
    </location>
</feature>
<feature type="short sequence motif" description="DEAD box">
    <location>
        <begin position="274"/>
        <end position="277"/>
    </location>
</feature>
<feature type="compositionally biased region" description="Basic and acidic residues" evidence="4">
    <location>
        <begin position="1"/>
        <end position="21"/>
    </location>
</feature>
<feature type="compositionally biased region" description="Basic residues" evidence="4">
    <location>
        <begin position="22"/>
        <end position="33"/>
    </location>
</feature>
<feature type="compositionally biased region" description="Basic and acidic residues" evidence="4">
    <location>
        <begin position="34"/>
        <end position="72"/>
    </location>
</feature>
<feature type="binding site" evidence="2">
    <location>
        <begin position="167"/>
        <end position="174"/>
    </location>
    <ligand>
        <name>ATP</name>
        <dbReference type="ChEBI" id="CHEBI:30616"/>
    </ligand>
</feature>
<sequence>MSKHELKDKKRKSVDGEDVSKSKKVKKDKKDKKDKKAKDGNDKVKDKKDKNKKDKSKTDKNLKEVQETEAHTGSETAPVGDSTAAAGYVESKELASVPQADVDTFFSENEVAVEDPESLGFRPLLSFSHLNLHSAIQKEISKFPKPTPIQAVSWPYLLAGKDVIGVAETGSGKTFAFGVPAINSLMSEKSTPRGVKCLVISPTRELASQIYDNLVQLTDKVGLNCCCVYGGVQKDSQREQLKKAQVVVATPGRLLDLIEEGSAKLAGVQYLVLDEADRMLEKGFEEDIKRIIKETKSDVRQTLMFTATWPKEVRELASTFMRAPVKVSIGNRDELSANKRITQVVEVIDPFKKEKRLLELLKQYQSGAKKNDKVLIFALYKKEASRVERNLKYNGYNVAAIHGDLSQQQRTQALSEFKAGTANLLLATDVAARGLDIPNVKTVINLTFPLTVEDYVHRIGRTGRAGATGVAHTLFTEQEKHLAGALVNVLNGAGQPVPEELMKFGTHTKRKEHNAYGAFYKNVDLTKKAKKITFD</sequence>
<dbReference type="EC" id="3.6.4.13"/>
<dbReference type="EMBL" id="AE016819">
    <property type="protein sequence ID" value="AAS53292.1"/>
    <property type="molecule type" value="Genomic_DNA"/>
</dbReference>
<dbReference type="RefSeq" id="NP_985468.1">
    <property type="nucleotide sequence ID" value="NM_210822.1"/>
</dbReference>
<dbReference type="SMR" id="Q755A5"/>
<dbReference type="FunCoup" id="Q755A5">
    <property type="interactions" value="440"/>
</dbReference>
<dbReference type="STRING" id="284811.Q755A5"/>
<dbReference type="EnsemblFungi" id="AAS53292">
    <property type="protein sequence ID" value="AAS53292"/>
    <property type="gene ID" value="AGOS_AFL080W"/>
</dbReference>
<dbReference type="GeneID" id="4621697"/>
<dbReference type="KEGG" id="ago:AGOS_AFL080W"/>
<dbReference type="eggNOG" id="KOG0331">
    <property type="taxonomic scope" value="Eukaryota"/>
</dbReference>
<dbReference type="HOGENOM" id="CLU_003041_1_5_1"/>
<dbReference type="InParanoid" id="Q755A5"/>
<dbReference type="OMA" id="KKTHDMY"/>
<dbReference type="OrthoDB" id="196131at2759"/>
<dbReference type="Proteomes" id="UP000000591">
    <property type="component" value="Chromosome VI"/>
</dbReference>
<dbReference type="GO" id="GO:0005730">
    <property type="term" value="C:nucleolus"/>
    <property type="evidence" value="ECO:0000318"/>
    <property type="project" value="GO_Central"/>
</dbReference>
<dbReference type="GO" id="GO:0030687">
    <property type="term" value="C:preribosome, large subunit precursor"/>
    <property type="evidence" value="ECO:0007669"/>
    <property type="project" value="EnsemblFungi"/>
</dbReference>
<dbReference type="GO" id="GO:0005524">
    <property type="term" value="F:ATP binding"/>
    <property type="evidence" value="ECO:0007669"/>
    <property type="project" value="UniProtKB-KW"/>
</dbReference>
<dbReference type="GO" id="GO:0016887">
    <property type="term" value="F:ATP hydrolysis activity"/>
    <property type="evidence" value="ECO:0007669"/>
    <property type="project" value="RHEA"/>
</dbReference>
<dbReference type="GO" id="GO:0003729">
    <property type="term" value="F:mRNA binding"/>
    <property type="evidence" value="ECO:0000318"/>
    <property type="project" value="GO_Central"/>
</dbReference>
<dbReference type="GO" id="GO:0003724">
    <property type="term" value="F:RNA helicase activity"/>
    <property type="evidence" value="ECO:0000318"/>
    <property type="project" value="GO_Central"/>
</dbReference>
<dbReference type="GO" id="GO:0000464">
    <property type="term" value="P:endonucleolytic cleavage in ITS1 upstream of 5.8S rRNA from tricistronic rRNA transcript (SSU-rRNA, 5.8S rRNA, LSU-rRNA)"/>
    <property type="evidence" value="ECO:0007669"/>
    <property type="project" value="EnsemblFungi"/>
</dbReference>
<dbReference type="GO" id="GO:0006364">
    <property type="term" value="P:rRNA processing"/>
    <property type="evidence" value="ECO:0000318"/>
    <property type="project" value="GO_Central"/>
</dbReference>
<dbReference type="CDD" id="cd00268">
    <property type="entry name" value="DEADc"/>
    <property type="match status" value="1"/>
</dbReference>
<dbReference type="CDD" id="cd18787">
    <property type="entry name" value="SF2_C_DEAD"/>
    <property type="match status" value="1"/>
</dbReference>
<dbReference type="FunFam" id="3.40.50.300:FF:002174">
    <property type="entry name" value="ATP-dependent RNA helicase DBP3"/>
    <property type="match status" value="1"/>
</dbReference>
<dbReference type="FunFam" id="3.40.50.300:FF:000008">
    <property type="entry name" value="ATP-dependent RNA helicase RhlB"/>
    <property type="match status" value="1"/>
</dbReference>
<dbReference type="Gene3D" id="3.40.50.300">
    <property type="entry name" value="P-loop containing nucleotide triphosphate hydrolases"/>
    <property type="match status" value="2"/>
</dbReference>
<dbReference type="InterPro" id="IPR011545">
    <property type="entry name" value="DEAD/DEAH_box_helicase_dom"/>
</dbReference>
<dbReference type="InterPro" id="IPR014001">
    <property type="entry name" value="Helicase_ATP-bd"/>
</dbReference>
<dbReference type="InterPro" id="IPR001650">
    <property type="entry name" value="Helicase_C-like"/>
</dbReference>
<dbReference type="InterPro" id="IPR027417">
    <property type="entry name" value="P-loop_NTPase"/>
</dbReference>
<dbReference type="InterPro" id="IPR000629">
    <property type="entry name" value="RNA-helicase_DEAD-box_CS"/>
</dbReference>
<dbReference type="InterPro" id="IPR014014">
    <property type="entry name" value="RNA_helicase_DEAD_Q_motif"/>
</dbReference>
<dbReference type="PANTHER" id="PTHR47958">
    <property type="entry name" value="ATP-DEPENDENT RNA HELICASE DBP3"/>
    <property type="match status" value="1"/>
</dbReference>
<dbReference type="Pfam" id="PF00270">
    <property type="entry name" value="DEAD"/>
    <property type="match status" value="1"/>
</dbReference>
<dbReference type="Pfam" id="PF00271">
    <property type="entry name" value="Helicase_C"/>
    <property type="match status" value="1"/>
</dbReference>
<dbReference type="SMART" id="SM00487">
    <property type="entry name" value="DEXDc"/>
    <property type="match status" value="1"/>
</dbReference>
<dbReference type="SMART" id="SM00490">
    <property type="entry name" value="HELICc"/>
    <property type="match status" value="1"/>
</dbReference>
<dbReference type="SUPFAM" id="SSF52540">
    <property type="entry name" value="P-loop containing nucleoside triphosphate hydrolases"/>
    <property type="match status" value="1"/>
</dbReference>
<dbReference type="PROSITE" id="PS00039">
    <property type="entry name" value="DEAD_ATP_HELICASE"/>
    <property type="match status" value="1"/>
</dbReference>
<dbReference type="PROSITE" id="PS51192">
    <property type="entry name" value="HELICASE_ATP_BIND_1"/>
    <property type="match status" value="1"/>
</dbReference>
<dbReference type="PROSITE" id="PS51194">
    <property type="entry name" value="HELICASE_CTER"/>
    <property type="match status" value="1"/>
</dbReference>
<dbReference type="PROSITE" id="PS51195">
    <property type="entry name" value="Q_MOTIF"/>
    <property type="match status" value="1"/>
</dbReference>
<keyword id="KW-0067">ATP-binding</keyword>
<keyword id="KW-0347">Helicase</keyword>
<keyword id="KW-0378">Hydrolase</keyword>
<keyword id="KW-0547">Nucleotide-binding</keyword>
<keyword id="KW-0539">Nucleus</keyword>
<keyword id="KW-1185">Reference proteome</keyword>
<keyword id="KW-0690">Ribosome biogenesis</keyword>
<keyword id="KW-0694">RNA-binding</keyword>
<keyword id="KW-0698">rRNA processing</keyword>
<organism>
    <name type="scientific">Eremothecium gossypii (strain ATCC 10895 / CBS 109.51 / FGSC 9923 / NRRL Y-1056)</name>
    <name type="common">Yeast</name>
    <name type="synonym">Ashbya gossypii</name>
    <dbReference type="NCBI Taxonomy" id="284811"/>
    <lineage>
        <taxon>Eukaryota</taxon>
        <taxon>Fungi</taxon>
        <taxon>Dikarya</taxon>
        <taxon>Ascomycota</taxon>
        <taxon>Saccharomycotina</taxon>
        <taxon>Saccharomycetes</taxon>
        <taxon>Saccharomycetales</taxon>
        <taxon>Saccharomycetaceae</taxon>
        <taxon>Eremothecium</taxon>
    </lineage>
</organism>
<accession>Q755A5</accession>
<proteinExistence type="inferred from homology"/>